<comment type="function">
    <text evidence="1">Reversibly transfers an adenylyl group from ATP to 4'-phosphopantetheine, yielding dephospho-CoA (dPCoA) and pyrophosphate.</text>
</comment>
<comment type="catalytic activity">
    <reaction evidence="1">
        <text>(R)-4'-phosphopantetheine + ATP + H(+) = 3'-dephospho-CoA + diphosphate</text>
        <dbReference type="Rhea" id="RHEA:19801"/>
        <dbReference type="ChEBI" id="CHEBI:15378"/>
        <dbReference type="ChEBI" id="CHEBI:30616"/>
        <dbReference type="ChEBI" id="CHEBI:33019"/>
        <dbReference type="ChEBI" id="CHEBI:57328"/>
        <dbReference type="ChEBI" id="CHEBI:61723"/>
        <dbReference type="EC" id="2.7.7.3"/>
    </reaction>
</comment>
<comment type="cofactor">
    <cofactor evidence="1">
        <name>Mg(2+)</name>
        <dbReference type="ChEBI" id="CHEBI:18420"/>
    </cofactor>
</comment>
<comment type="pathway">
    <text evidence="1">Cofactor biosynthesis; coenzyme A biosynthesis; CoA from (R)-pantothenate: step 4/5.</text>
</comment>
<comment type="subunit">
    <text evidence="1">Homohexamer.</text>
</comment>
<comment type="subcellular location">
    <subcellularLocation>
        <location evidence="1">Cytoplasm</location>
    </subcellularLocation>
</comment>
<comment type="similarity">
    <text evidence="1">Belongs to the bacterial CoaD family.</text>
</comment>
<keyword id="KW-0067">ATP-binding</keyword>
<keyword id="KW-0173">Coenzyme A biosynthesis</keyword>
<keyword id="KW-0963">Cytoplasm</keyword>
<keyword id="KW-0460">Magnesium</keyword>
<keyword id="KW-0547">Nucleotide-binding</keyword>
<keyword id="KW-0548">Nucleotidyltransferase</keyword>
<keyword id="KW-1185">Reference proteome</keyword>
<keyword id="KW-0808">Transferase</keyword>
<evidence type="ECO:0000255" key="1">
    <source>
        <dbReference type="HAMAP-Rule" id="MF_00151"/>
    </source>
</evidence>
<accession>Q73VL1</accession>
<proteinExistence type="inferred from homology"/>
<reference key="1">
    <citation type="journal article" date="2005" name="Proc. Natl. Acad. Sci. U.S.A.">
        <title>The complete genome sequence of Mycobacterium avium subspecies paratuberculosis.</title>
        <authorList>
            <person name="Li L."/>
            <person name="Bannantine J.P."/>
            <person name="Zhang Q."/>
            <person name="Amonsin A."/>
            <person name="May B.J."/>
            <person name="Alt D."/>
            <person name="Banerji N."/>
            <person name="Kanjilal S."/>
            <person name="Kapur V."/>
        </authorList>
    </citation>
    <scope>NUCLEOTIDE SEQUENCE [LARGE SCALE GENOMIC DNA]</scope>
    <source>
        <strain>ATCC BAA-968 / K-10</strain>
    </source>
</reference>
<sequence length="160" mass="17453">MTGAVCPGSFDPVTLGHVDVFERASAQFDEVVVAILTNPAKKGMFDLDERIAMIEESTTHLSNLRVEAGQGLVVDFVRSRGMTAIVKGLRTGTDFEYELQMAQMNKHIAGVDTFFVATAPRYSFVSSSLAKEVAMLGGDVSELLPEPVNRRLREKLSGRS</sequence>
<protein>
    <recommendedName>
        <fullName evidence="1">Phosphopantetheine adenylyltransferase</fullName>
        <ecNumber evidence="1">2.7.7.3</ecNumber>
    </recommendedName>
    <alternativeName>
        <fullName evidence="1">Dephospho-CoA pyrophosphorylase</fullName>
    </alternativeName>
    <alternativeName>
        <fullName evidence="1">Pantetheine-phosphate adenylyltransferase</fullName>
        <shortName evidence="1">PPAT</shortName>
    </alternativeName>
</protein>
<organism>
    <name type="scientific">Mycolicibacterium paratuberculosis (strain ATCC BAA-968 / K-10)</name>
    <name type="common">Mycobacterium paratuberculosis</name>
    <dbReference type="NCBI Taxonomy" id="262316"/>
    <lineage>
        <taxon>Bacteria</taxon>
        <taxon>Bacillati</taxon>
        <taxon>Actinomycetota</taxon>
        <taxon>Actinomycetes</taxon>
        <taxon>Mycobacteriales</taxon>
        <taxon>Mycobacteriaceae</taxon>
        <taxon>Mycobacterium</taxon>
        <taxon>Mycobacterium avium complex (MAC)</taxon>
    </lineage>
</organism>
<gene>
    <name evidence="1" type="primary">coaD</name>
    <name type="synonym">kdtB</name>
    <name type="ordered locus">MAP_3002c</name>
</gene>
<name>COAD_MYCPA</name>
<feature type="chain" id="PRO_0000156239" description="Phosphopantetheine adenylyltransferase">
    <location>
        <begin position="1"/>
        <end position="160"/>
    </location>
</feature>
<feature type="binding site" evidence="1">
    <location>
        <begin position="9"/>
        <end position="10"/>
    </location>
    <ligand>
        <name>ATP</name>
        <dbReference type="ChEBI" id="CHEBI:30616"/>
    </ligand>
</feature>
<feature type="binding site" evidence="1">
    <location>
        <position position="9"/>
    </location>
    <ligand>
        <name>substrate</name>
    </ligand>
</feature>
<feature type="binding site" evidence="1">
    <location>
        <position position="17"/>
    </location>
    <ligand>
        <name>ATP</name>
        <dbReference type="ChEBI" id="CHEBI:30616"/>
    </ligand>
</feature>
<feature type="binding site" evidence="1">
    <location>
        <position position="41"/>
    </location>
    <ligand>
        <name>substrate</name>
    </ligand>
</feature>
<feature type="binding site" evidence="1">
    <location>
        <position position="73"/>
    </location>
    <ligand>
        <name>substrate</name>
    </ligand>
</feature>
<feature type="binding site" evidence="1">
    <location>
        <position position="87"/>
    </location>
    <ligand>
        <name>substrate</name>
    </ligand>
</feature>
<feature type="binding site" evidence="1">
    <location>
        <begin position="88"/>
        <end position="90"/>
    </location>
    <ligand>
        <name>ATP</name>
        <dbReference type="ChEBI" id="CHEBI:30616"/>
    </ligand>
</feature>
<feature type="binding site" evidence="1">
    <location>
        <position position="98"/>
    </location>
    <ligand>
        <name>ATP</name>
        <dbReference type="ChEBI" id="CHEBI:30616"/>
    </ligand>
</feature>
<feature type="binding site" evidence="1">
    <location>
        <begin position="122"/>
        <end position="128"/>
    </location>
    <ligand>
        <name>ATP</name>
        <dbReference type="ChEBI" id="CHEBI:30616"/>
    </ligand>
</feature>
<feature type="site" description="Transition state stabilizer" evidence="1">
    <location>
        <position position="17"/>
    </location>
</feature>
<dbReference type="EC" id="2.7.7.3" evidence="1"/>
<dbReference type="EMBL" id="AE016958">
    <property type="protein sequence ID" value="AAS05550.1"/>
    <property type="molecule type" value="Genomic_DNA"/>
</dbReference>
<dbReference type="RefSeq" id="WP_003875043.1">
    <property type="nucleotide sequence ID" value="NZ_CP106873.1"/>
</dbReference>
<dbReference type="SMR" id="Q73VL1"/>
<dbReference type="STRING" id="262316.MAP_3002c"/>
<dbReference type="GeneID" id="75271211"/>
<dbReference type="KEGG" id="mpa:MAP_3002c"/>
<dbReference type="eggNOG" id="COG0669">
    <property type="taxonomic scope" value="Bacteria"/>
</dbReference>
<dbReference type="HOGENOM" id="CLU_100149_1_0_11"/>
<dbReference type="UniPathway" id="UPA00241">
    <property type="reaction ID" value="UER00355"/>
</dbReference>
<dbReference type="Proteomes" id="UP000000580">
    <property type="component" value="Chromosome"/>
</dbReference>
<dbReference type="GO" id="GO:0005737">
    <property type="term" value="C:cytoplasm"/>
    <property type="evidence" value="ECO:0007669"/>
    <property type="project" value="UniProtKB-SubCell"/>
</dbReference>
<dbReference type="GO" id="GO:0005524">
    <property type="term" value="F:ATP binding"/>
    <property type="evidence" value="ECO:0007669"/>
    <property type="project" value="UniProtKB-KW"/>
</dbReference>
<dbReference type="GO" id="GO:0004595">
    <property type="term" value="F:pantetheine-phosphate adenylyltransferase activity"/>
    <property type="evidence" value="ECO:0007669"/>
    <property type="project" value="UniProtKB-UniRule"/>
</dbReference>
<dbReference type="GO" id="GO:0015937">
    <property type="term" value="P:coenzyme A biosynthetic process"/>
    <property type="evidence" value="ECO:0007669"/>
    <property type="project" value="UniProtKB-UniRule"/>
</dbReference>
<dbReference type="CDD" id="cd02163">
    <property type="entry name" value="PPAT"/>
    <property type="match status" value="1"/>
</dbReference>
<dbReference type="FunFam" id="3.40.50.620:FF:000012">
    <property type="entry name" value="Phosphopantetheine adenylyltransferase"/>
    <property type="match status" value="1"/>
</dbReference>
<dbReference type="Gene3D" id="3.40.50.620">
    <property type="entry name" value="HUPs"/>
    <property type="match status" value="1"/>
</dbReference>
<dbReference type="HAMAP" id="MF_00151">
    <property type="entry name" value="PPAT_bact"/>
    <property type="match status" value="1"/>
</dbReference>
<dbReference type="InterPro" id="IPR004821">
    <property type="entry name" value="Cyt_trans-like"/>
</dbReference>
<dbReference type="InterPro" id="IPR001980">
    <property type="entry name" value="PPAT"/>
</dbReference>
<dbReference type="InterPro" id="IPR014729">
    <property type="entry name" value="Rossmann-like_a/b/a_fold"/>
</dbReference>
<dbReference type="NCBIfam" id="TIGR01510">
    <property type="entry name" value="coaD_prev_kdtB"/>
    <property type="match status" value="1"/>
</dbReference>
<dbReference type="NCBIfam" id="TIGR00125">
    <property type="entry name" value="cyt_tran_rel"/>
    <property type="match status" value="1"/>
</dbReference>
<dbReference type="PANTHER" id="PTHR21342">
    <property type="entry name" value="PHOSPHOPANTETHEINE ADENYLYLTRANSFERASE"/>
    <property type="match status" value="1"/>
</dbReference>
<dbReference type="PANTHER" id="PTHR21342:SF1">
    <property type="entry name" value="PHOSPHOPANTETHEINE ADENYLYLTRANSFERASE"/>
    <property type="match status" value="1"/>
</dbReference>
<dbReference type="Pfam" id="PF01467">
    <property type="entry name" value="CTP_transf_like"/>
    <property type="match status" value="1"/>
</dbReference>
<dbReference type="PRINTS" id="PR01020">
    <property type="entry name" value="LPSBIOSNTHSS"/>
</dbReference>
<dbReference type="SUPFAM" id="SSF52374">
    <property type="entry name" value="Nucleotidylyl transferase"/>
    <property type="match status" value="1"/>
</dbReference>